<reference key="1">
    <citation type="journal article" date="2011" name="J. Bacteriol.">
        <title>Genome of Ochrobactrum anthropi ATCC 49188 T, a versatile opportunistic pathogen and symbiont of several eukaryotic hosts.</title>
        <authorList>
            <person name="Chain P.S."/>
            <person name="Lang D.M."/>
            <person name="Comerci D.J."/>
            <person name="Malfatti S.A."/>
            <person name="Vergez L.M."/>
            <person name="Shin M."/>
            <person name="Ugalde R.A."/>
            <person name="Garcia E."/>
            <person name="Tolmasky M.E."/>
        </authorList>
    </citation>
    <scope>NUCLEOTIDE SEQUENCE [LARGE SCALE GENOMIC DNA]</scope>
    <source>
        <strain>ATCC 49188 / DSM 6882 / CCUG 24695 / JCM 21032 / LMG 3331 / NBRC 15819 / NCTC 12168 / Alc 37</strain>
    </source>
</reference>
<comment type="function">
    <text evidence="1">Provides the (R)-glutamate required for cell wall biosynthesis.</text>
</comment>
<comment type="catalytic activity">
    <reaction evidence="1">
        <text>L-glutamate = D-glutamate</text>
        <dbReference type="Rhea" id="RHEA:12813"/>
        <dbReference type="ChEBI" id="CHEBI:29985"/>
        <dbReference type="ChEBI" id="CHEBI:29986"/>
        <dbReference type="EC" id="5.1.1.3"/>
    </reaction>
</comment>
<comment type="pathway">
    <text evidence="1">Cell wall biogenesis; peptidoglycan biosynthesis.</text>
</comment>
<comment type="similarity">
    <text evidence="1">Belongs to the aspartate/glutamate racemases family.</text>
</comment>
<keyword id="KW-0133">Cell shape</keyword>
<keyword id="KW-0961">Cell wall biogenesis/degradation</keyword>
<keyword id="KW-0413">Isomerase</keyword>
<keyword id="KW-0573">Peptidoglycan synthesis</keyword>
<keyword id="KW-1185">Reference proteome</keyword>
<proteinExistence type="inferred from homology"/>
<gene>
    <name evidence="1" type="primary">murI</name>
    <name type="ordered locus">Oant_1996</name>
</gene>
<protein>
    <recommendedName>
        <fullName evidence="1">Glutamate racemase</fullName>
        <ecNumber evidence="1">5.1.1.3</ecNumber>
    </recommendedName>
</protein>
<sequence>MKNAPAVSFSAMPSADAERPILVFDSGIGGLTVLREARVLMPDRRFVYVADDAGFPYGGWEEDALRERIVELFGKLIAAYDPEIAVIACNTASTLVLDDLRQAYPSVPFVGTVPAIKPAAERTSSGLVSVLATPGTVRRAYTRDLIQSFATQCHVRLVGADQLATVAEAHIRGERIDEALVVEQIAPCFIEQDGNRTDIVVLACTHYPFLANVFRRLAPWPVDWLDPAEAIARRTVSLLKPRRADEELHHHNDLAVVTSRNPDYAIRRLMQGFGLHFA</sequence>
<name>MURI_BRUA4</name>
<feature type="chain" id="PRO_1000047592" description="Glutamate racemase">
    <location>
        <begin position="1"/>
        <end position="278"/>
    </location>
</feature>
<feature type="active site" description="Proton donor/acceptor" evidence="1">
    <location>
        <position position="89"/>
    </location>
</feature>
<feature type="active site" description="Proton donor/acceptor" evidence="1">
    <location>
        <position position="204"/>
    </location>
</feature>
<feature type="binding site" evidence="1">
    <location>
        <begin position="25"/>
        <end position="26"/>
    </location>
    <ligand>
        <name>substrate</name>
    </ligand>
</feature>
<feature type="binding site" evidence="1">
    <location>
        <begin position="57"/>
        <end position="58"/>
    </location>
    <ligand>
        <name>substrate</name>
    </ligand>
</feature>
<feature type="binding site" evidence="1">
    <location>
        <begin position="90"/>
        <end position="91"/>
    </location>
    <ligand>
        <name>substrate</name>
    </ligand>
</feature>
<feature type="binding site" evidence="1">
    <location>
        <begin position="205"/>
        <end position="206"/>
    </location>
    <ligand>
        <name>substrate</name>
    </ligand>
</feature>
<organism>
    <name type="scientific">Brucella anthropi (strain ATCC 49188 / DSM 6882 / CCUG 24695 / JCM 21032 / LMG 3331 / NBRC 15819 / NCTC 12168 / Alc 37)</name>
    <name type="common">Ochrobactrum anthropi</name>
    <dbReference type="NCBI Taxonomy" id="439375"/>
    <lineage>
        <taxon>Bacteria</taxon>
        <taxon>Pseudomonadati</taxon>
        <taxon>Pseudomonadota</taxon>
        <taxon>Alphaproteobacteria</taxon>
        <taxon>Hyphomicrobiales</taxon>
        <taxon>Brucellaceae</taxon>
        <taxon>Brucella/Ochrobactrum group</taxon>
        <taxon>Brucella</taxon>
    </lineage>
</organism>
<accession>A6X0F8</accession>
<dbReference type="EC" id="5.1.1.3" evidence="1"/>
<dbReference type="EMBL" id="CP000758">
    <property type="protein sequence ID" value="ABS14712.1"/>
    <property type="molecule type" value="Genomic_DNA"/>
</dbReference>
<dbReference type="RefSeq" id="WP_012091924.1">
    <property type="nucleotide sequence ID" value="NC_009667.1"/>
</dbReference>
<dbReference type="SMR" id="A6X0F8"/>
<dbReference type="STRING" id="439375.Oant_1996"/>
<dbReference type="KEGG" id="oan:Oant_1996"/>
<dbReference type="PATRIC" id="fig|439375.7.peg.2098"/>
<dbReference type="eggNOG" id="COG0796">
    <property type="taxonomic scope" value="Bacteria"/>
</dbReference>
<dbReference type="HOGENOM" id="CLU_052344_2_0_5"/>
<dbReference type="PhylomeDB" id="A6X0F8"/>
<dbReference type="UniPathway" id="UPA00219"/>
<dbReference type="Proteomes" id="UP000002301">
    <property type="component" value="Chromosome 1"/>
</dbReference>
<dbReference type="GO" id="GO:0008881">
    <property type="term" value="F:glutamate racemase activity"/>
    <property type="evidence" value="ECO:0007669"/>
    <property type="project" value="UniProtKB-UniRule"/>
</dbReference>
<dbReference type="GO" id="GO:0071555">
    <property type="term" value="P:cell wall organization"/>
    <property type="evidence" value="ECO:0007669"/>
    <property type="project" value="UniProtKB-KW"/>
</dbReference>
<dbReference type="GO" id="GO:0009252">
    <property type="term" value="P:peptidoglycan biosynthetic process"/>
    <property type="evidence" value="ECO:0007669"/>
    <property type="project" value="UniProtKB-UniRule"/>
</dbReference>
<dbReference type="GO" id="GO:0008360">
    <property type="term" value="P:regulation of cell shape"/>
    <property type="evidence" value="ECO:0007669"/>
    <property type="project" value="UniProtKB-KW"/>
</dbReference>
<dbReference type="Gene3D" id="3.40.50.1860">
    <property type="match status" value="2"/>
</dbReference>
<dbReference type="HAMAP" id="MF_00258">
    <property type="entry name" value="Glu_racemase"/>
    <property type="match status" value="1"/>
</dbReference>
<dbReference type="InterPro" id="IPR015942">
    <property type="entry name" value="Asp/Glu/hydantoin_racemase"/>
</dbReference>
<dbReference type="InterPro" id="IPR001920">
    <property type="entry name" value="Asp/Glu_race"/>
</dbReference>
<dbReference type="InterPro" id="IPR018187">
    <property type="entry name" value="Asp/Glu_racemase_AS_1"/>
</dbReference>
<dbReference type="InterPro" id="IPR033134">
    <property type="entry name" value="Asp/Glu_racemase_AS_2"/>
</dbReference>
<dbReference type="InterPro" id="IPR004391">
    <property type="entry name" value="Glu_race"/>
</dbReference>
<dbReference type="NCBIfam" id="TIGR00067">
    <property type="entry name" value="glut_race"/>
    <property type="match status" value="1"/>
</dbReference>
<dbReference type="PANTHER" id="PTHR21198">
    <property type="entry name" value="GLUTAMATE RACEMASE"/>
    <property type="match status" value="1"/>
</dbReference>
<dbReference type="PANTHER" id="PTHR21198:SF2">
    <property type="entry name" value="GLUTAMATE RACEMASE"/>
    <property type="match status" value="1"/>
</dbReference>
<dbReference type="Pfam" id="PF01177">
    <property type="entry name" value="Asp_Glu_race"/>
    <property type="match status" value="1"/>
</dbReference>
<dbReference type="SUPFAM" id="SSF53681">
    <property type="entry name" value="Aspartate/glutamate racemase"/>
    <property type="match status" value="2"/>
</dbReference>
<dbReference type="PROSITE" id="PS00923">
    <property type="entry name" value="ASP_GLU_RACEMASE_1"/>
    <property type="match status" value="1"/>
</dbReference>
<dbReference type="PROSITE" id="PS00924">
    <property type="entry name" value="ASP_GLU_RACEMASE_2"/>
    <property type="match status" value="1"/>
</dbReference>
<evidence type="ECO:0000255" key="1">
    <source>
        <dbReference type="HAMAP-Rule" id="MF_00258"/>
    </source>
</evidence>